<sequence>MTDDATQRRRLEAGLAQIGLALAPAQIDTLFAYLALLRKWNGVYNLTAIRHPDEMLTHHMLDSLAAVPALAEAARAAEVGTPARGRVLDVGSGGGMPGLPLAIACPDVSVLMVDIVQKKTAFLTQCRAQLGLSNAAAHWGPVEKLDDASGFAVITSRAFAELTDFVNLSGQLLAPHGKLIAMKGVYPQAELDRMEAAGLMAQWQVDAVPRITVPGLDAERHLVVLSRRASAHA</sequence>
<evidence type="ECO:0000255" key="1">
    <source>
        <dbReference type="HAMAP-Rule" id="MF_00074"/>
    </source>
</evidence>
<accession>Q0K5L7</accession>
<dbReference type="EC" id="2.1.1.170" evidence="1"/>
<dbReference type="EMBL" id="AM260479">
    <property type="protein sequence ID" value="CAJ94704.1"/>
    <property type="molecule type" value="Genomic_DNA"/>
</dbReference>
<dbReference type="RefSeq" id="WP_011616232.1">
    <property type="nucleotide sequence ID" value="NC_008313.1"/>
</dbReference>
<dbReference type="SMR" id="Q0K5L7"/>
<dbReference type="STRING" id="381666.H16_A3647"/>
<dbReference type="KEGG" id="reh:H16_A3647"/>
<dbReference type="PATRIC" id="fig|381666.6.peg.4035"/>
<dbReference type="eggNOG" id="COG0357">
    <property type="taxonomic scope" value="Bacteria"/>
</dbReference>
<dbReference type="HOGENOM" id="CLU_065341_2_0_4"/>
<dbReference type="OrthoDB" id="9808773at2"/>
<dbReference type="Proteomes" id="UP000008210">
    <property type="component" value="Chromosome 1"/>
</dbReference>
<dbReference type="GO" id="GO:0005829">
    <property type="term" value="C:cytosol"/>
    <property type="evidence" value="ECO:0007669"/>
    <property type="project" value="TreeGrafter"/>
</dbReference>
<dbReference type="GO" id="GO:0070043">
    <property type="term" value="F:rRNA (guanine-N7-)-methyltransferase activity"/>
    <property type="evidence" value="ECO:0007669"/>
    <property type="project" value="UniProtKB-UniRule"/>
</dbReference>
<dbReference type="CDD" id="cd02440">
    <property type="entry name" value="AdoMet_MTases"/>
    <property type="match status" value="1"/>
</dbReference>
<dbReference type="Gene3D" id="3.40.50.150">
    <property type="entry name" value="Vaccinia Virus protein VP39"/>
    <property type="match status" value="1"/>
</dbReference>
<dbReference type="HAMAP" id="MF_00074">
    <property type="entry name" value="16SrRNA_methyltr_G"/>
    <property type="match status" value="1"/>
</dbReference>
<dbReference type="InterPro" id="IPR003682">
    <property type="entry name" value="rRNA_ssu_MeTfrase_G"/>
</dbReference>
<dbReference type="InterPro" id="IPR029063">
    <property type="entry name" value="SAM-dependent_MTases_sf"/>
</dbReference>
<dbReference type="NCBIfam" id="TIGR00138">
    <property type="entry name" value="rsmG_gidB"/>
    <property type="match status" value="1"/>
</dbReference>
<dbReference type="PANTHER" id="PTHR31760">
    <property type="entry name" value="S-ADENOSYL-L-METHIONINE-DEPENDENT METHYLTRANSFERASES SUPERFAMILY PROTEIN"/>
    <property type="match status" value="1"/>
</dbReference>
<dbReference type="PANTHER" id="PTHR31760:SF0">
    <property type="entry name" value="S-ADENOSYL-L-METHIONINE-DEPENDENT METHYLTRANSFERASES SUPERFAMILY PROTEIN"/>
    <property type="match status" value="1"/>
</dbReference>
<dbReference type="Pfam" id="PF02527">
    <property type="entry name" value="GidB"/>
    <property type="match status" value="1"/>
</dbReference>
<dbReference type="PIRSF" id="PIRSF003078">
    <property type="entry name" value="GidB"/>
    <property type="match status" value="1"/>
</dbReference>
<dbReference type="SUPFAM" id="SSF53335">
    <property type="entry name" value="S-adenosyl-L-methionine-dependent methyltransferases"/>
    <property type="match status" value="1"/>
</dbReference>
<comment type="function">
    <text evidence="1">Specifically methylates the N7 position of guanine in position 527 of 16S rRNA.</text>
</comment>
<comment type="catalytic activity">
    <reaction evidence="1">
        <text>guanosine(527) in 16S rRNA + S-adenosyl-L-methionine = N(7)-methylguanosine(527) in 16S rRNA + S-adenosyl-L-homocysteine</text>
        <dbReference type="Rhea" id="RHEA:42732"/>
        <dbReference type="Rhea" id="RHEA-COMP:10209"/>
        <dbReference type="Rhea" id="RHEA-COMP:10210"/>
        <dbReference type="ChEBI" id="CHEBI:57856"/>
        <dbReference type="ChEBI" id="CHEBI:59789"/>
        <dbReference type="ChEBI" id="CHEBI:74269"/>
        <dbReference type="ChEBI" id="CHEBI:74480"/>
        <dbReference type="EC" id="2.1.1.170"/>
    </reaction>
</comment>
<comment type="subcellular location">
    <subcellularLocation>
        <location evidence="1">Cytoplasm</location>
    </subcellularLocation>
</comment>
<comment type="similarity">
    <text evidence="1">Belongs to the methyltransferase superfamily. RNA methyltransferase RsmG family.</text>
</comment>
<feature type="chain" id="PRO_0000335407" description="Ribosomal RNA small subunit methyltransferase G">
    <location>
        <begin position="1"/>
        <end position="233"/>
    </location>
</feature>
<feature type="binding site" evidence="1">
    <location>
        <position position="91"/>
    </location>
    <ligand>
        <name>S-adenosyl-L-methionine</name>
        <dbReference type="ChEBI" id="CHEBI:59789"/>
    </ligand>
</feature>
<feature type="binding site" evidence="1">
    <location>
        <position position="96"/>
    </location>
    <ligand>
        <name>S-adenosyl-L-methionine</name>
        <dbReference type="ChEBI" id="CHEBI:59789"/>
    </ligand>
</feature>
<feature type="binding site" evidence="1">
    <location>
        <begin position="142"/>
        <end position="143"/>
    </location>
    <ligand>
        <name>S-adenosyl-L-methionine</name>
        <dbReference type="ChEBI" id="CHEBI:59789"/>
    </ligand>
</feature>
<feature type="binding site" evidence="1">
    <location>
        <position position="157"/>
    </location>
    <ligand>
        <name>S-adenosyl-L-methionine</name>
        <dbReference type="ChEBI" id="CHEBI:59789"/>
    </ligand>
</feature>
<reference key="1">
    <citation type="journal article" date="2006" name="Nat. Biotechnol.">
        <title>Genome sequence of the bioplastic-producing 'Knallgas' bacterium Ralstonia eutropha H16.</title>
        <authorList>
            <person name="Pohlmann A."/>
            <person name="Fricke W.F."/>
            <person name="Reinecke F."/>
            <person name="Kusian B."/>
            <person name="Liesegang H."/>
            <person name="Cramm R."/>
            <person name="Eitinger T."/>
            <person name="Ewering C."/>
            <person name="Poetter M."/>
            <person name="Schwartz E."/>
            <person name="Strittmatter A."/>
            <person name="Voss I."/>
            <person name="Gottschalk G."/>
            <person name="Steinbuechel A."/>
            <person name="Friedrich B."/>
            <person name="Bowien B."/>
        </authorList>
    </citation>
    <scope>NUCLEOTIDE SEQUENCE [LARGE SCALE GENOMIC DNA]</scope>
    <source>
        <strain>ATCC 17699 / DSM 428 / KCTC 22496 / NCIMB 10442 / H16 / Stanier 337</strain>
    </source>
</reference>
<organism>
    <name type="scientific">Cupriavidus necator (strain ATCC 17699 / DSM 428 / KCTC 22496 / NCIMB 10442 / H16 / Stanier 337)</name>
    <name type="common">Ralstonia eutropha</name>
    <dbReference type="NCBI Taxonomy" id="381666"/>
    <lineage>
        <taxon>Bacteria</taxon>
        <taxon>Pseudomonadati</taxon>
        <taxon>Pseudomonadota</taxon>
        <taxon>Betaproteobacteria</taxon>
        <taxon>Burkholderiales</taxon>
        <taxon>Burkholderiaceae</taxon>
        <taxon>Cupriavidus</taxon>
    </lineage>
</organism>
<proteinExistence type="inferred from homology"/>
<keyword id="KW-0963">Cytoplasm</keyword>
<keyword id="KW-0489">Methyltransferase</keyword>
<keyword id="KW-1185">Reference proteome</keyword>
<keyword id="KW-0698">rRNA processing</keyword>
<keyword id="KW-0949">S-adenosyl-L-methionine</keyword>
<keyword id="KW-0808">Transferase</keyword>
<protein>
    <recommendedName>
        <fullName evidence="1">Ribosomal RNA small subunit methyltransferase G</fullName>
        <ecNumber evidence="1">2.1.1.170</ecNumber>
    </recommendedName>
    <alternativeName>
        <fullName evidence="1">16S rRNA 7-methylguanosine methyltransferase</fullName>
        <shortName evidence="1">16S rRNA m7G methyltransferase</shortName>
    </alternativeName>
</protein>
<name>RSMG_CUPNH</name>
<gene>
    <name evidence="1" type="primary">rsmG</name>
    <name type="ordered locus">H16_A3647</name>
</gene>